<accession>Q5HRQ3</accession>
<organism>
    <name type="scientific">Staphylococcus epidermidis (strain ATCC 35984 / DSM 28319 / BCRC 17069 / CCUG 31568 / BM 3577 / RP62A)</name>
    <dbReference type="NCBI Taxonomy" id="176279"/>
    <lineage>
        <taxon>Bacteria</taxon>
        <taxon>Bacillati</taxon>
        <taxon>Bacillota</taxon>
        <taxon>Bacilli</taxon>
        <taxon>Bacillales</taxon>
        <taxon>Staphylococcaceae</taxon>
        <taxon>Staphylococcus</taxon>
    </lineage>
</organism>
<proteinExistence type="inferred from homology"/>
<gene>
    <name evidence="1" type="primary">pth</name>
    <name type="ordered locus">SERP0140</name>
</gene>
<dbReference type="EC" id="3.1.1.29" evidence="1"/>
<dbReference type="EMBL" id="CP000029">
    <property type="protein sequence ID" value="AAW53492.1"/>
    <property type="molecule type" value="Genomic_DNA"/>
</dbReference>
<dbReference type="RefSeq" id="WP_001832229.1">
    <property type="nucleotide sequence ID" value="NC_002976.3"/>
</dbReference>
<dbReference type="SMR" id="Q5HRQ3"/>
<dbReference type="STRING" id="176279.SERP0140"/>
<dbReference type="GeneID" id="50019587"/>
<dbReference type="KEGG" id="ser:SERP0140"/>
<dbReference type="eggNOG" id="COG0193">
    <property type="taxonomic scope" value="Bacteria"/>
</dbReference>
<dbReference type="HOGENOM" id="CLU_062456_4_1_9"/>
<dbReference type="Proteomes" id="UP000000531">
    <property type="component" value="Chromosome"/>
</dbReference>
<dbReference type="GO" id="GO:0005737">
    <property type="term" value="C:cytoplasm"/>
    <property type="evidence" value="ECO:0007669"/>
    <property type="project" value="UniProtKB-SubCell"/>
</dbReference>
<dbReference type="GO" id="GO:0004045">
    <property type="term" value="F:peptidyl-tRNA hydrolase activity"/>
    <property type="evidence" value="ECO:0007669"/>
    <property type="project" value="UniProtKB-UniRule"/>
</dbReference>
<dbReference type="GO" id="GO:0000049">
    <property type="term" value="F:tRNA binding"/>
    <property type="evidence" value="ECO:0007669"/>
    <property type="project" value="UniProtKB-UniRule"/>
</dbReference>
<dbReference type="GO" id="GO:0006515">
    <property type="term" value="P:protein quality control for misfolded or incompletely synthesized proteins"/>
    <property type="evidence" value="ECO:0007669"/>
    <property type="project" value="UniProtKB-UniRule"/>
</dbReference>
<dbReference type="GO" id="GO:0072344">
    <property type="term" value="P:rescue of stalled ribosome"/>
    <property type="evidence" value="ECO:0007669"/>
    <property type="project" value="UniProtKB-UniRule"/>
</dbReference>
<dbReference type="CDD" id="cd00462">
    <property type="entry name" value="PTH"/>
    <property type="match status" value="1"/>
</dbReference>
<dbReference type="FunFam" id="3.40.50.1470:FF:000001">
    <property type="entry name" value="Peptidyl-tRNA hydrolase"/>
    <property type="match status" value="1"/>
</dbReference>
<dbReference type="Gene3D" id="3.40.50.1470">
    <property type="entry name" value="Peptidyl-tRNA hydrolase"/>
    <property type="match status" value="1"/>
</dbReference>
<dbReference type="HAMAP" id="MF_00083">
    <property type="entry name" value="Pept_tRNA_hydro_bact"/>
    <property type="match status" value="1"/>
</dbReference>
<dbReference type="InterPro" id="IPR001328">
    <property type="entry name" value="Pept_tRNA_hydro"/>
</dbReference>
<dbReference type="InterPro" id="IPR018171">
    <property type="entry name" value="Pept_tRNA_hydro_CS"/>
</dbReference>
<dbReference type="InterPro" id="IPR036416">
    <property type="entry name" value="Pept_tRNA_hydro_sf"/>
</dbReference>
<dbReference type="NCBIfam" id="TIGR00447">
    <property type="entry name" value="pth"/>
    <property type="match status" value="1"/>
</dbReference>
<dbReference type="PANTHER" id="PTHR17224">
    <property type="entry name" value="PEPTIDYL-TRNA HYDROLASE"/>
    <property type="match status" value="1"/>
</dbReference>
<dbReference type="PANTHER" id="PTHR17224:SF1">
    <property type="entry name" value="PEPTIDYL-TRNA HYDROLASE"/>
    <property type="match status" value="1"/>
</dbReference>
<dbReference type="Pfam" id="PF01195">
    <property type="entry name" value="Pept_tRNA_hydro"/>
    <property type="match status" value="1"/>
</dbReference>
<dbReference type="SUPFAM" id="SSF53178">
    <property type="entry name" value="Peptidyl-tRNA hydrolase-like"/>
    <property type="match status" value="1"/>
</dbReference>
<dbReference type="PROSITE" id="PS01195">
    <property type="entry name" value="PEPT_TRNA_HYDROL_1"/>
    <property type="match status" value="1"/>
</dbReference>
<dbReference type="PROSITE" id="PS01196">
    <property type="entry name" value="PEPT_TRNA_HYDROL_2"/>
    <property type="match status" value="1"/>
</dbReference>
<feature type="chain" id="PRO_0000187822" description="Peptidyl-tRNA hydrolase">
    <location>
        <begin position="1"/>
        <end position="190"/>
    </location>
</feature>
<feature type="active site" description="Proton acceptor" evidence="1">
    <location>
        <position position="19"/>
    </location>
</feature>
<feature type="binding site" evidence="1">
    <location>
        <position position="14"/>
    </location>
    <ligand>
        <name>tRNA</name>
        <dbReference type="ChEBI" id="CHEBI:17843"/>
    </ligand>
</feature>
<feature type="binding site" evidence="1">
    <location>
        <position position="64"/>
    </location>
    <ligand>
        <name>tRNA</name>
        <dbReference type="ChEBI" id="CHEBI:17843"/>
    </ligand>
</feature>
<feature type="binding site" evidence="1">
    <location>
        <position position="66"/>
    </location>
    <ligand>
        <name>tRNA</name>
        <dbReference type="ChEBI" id="CHEBI:17843"/>
    </ligand>
</feature>
<feature type="binding site" evidence="1">
    <location>
        <position position="112"/>
    </location>
    <ligand>
        <name>tRNA</name>
        <dbReference type="ChEBI" id="CHEBI:17843"/>
    </ligand>
</feature>
<feature type="site" description="Discriminates between blocked and unblocked aminoacyl-tRNA" evidence="1">
    <location>
        <position position="9"/>
    </location>
</feature>
<feature type="site" description="Stabilizes the basic form of H active site to accept a proton" evidence="1">
    <location>
        <position position="91"/>
    </location>
</feature>
<comment type="function">
    <text evidence="1">Hydrolyzes ribosome-free peptidyl-tRNAs (with 1 or more amino acids incorporated), which drop off the ribosome during protein synthesis, or as a result of ribosome stalling.</text>
</comment>
<comment type="function">
    <text evidence="1">Catalyzes the release of premature peptidyl moieties from peptidyl-tRNA molecules trapped in stalled 50S ribosomal subunits, and thus maintains levels of free tRNAs and 50S ribosomes.</text>
</comment>
<comment type="catalytic activity">
    <reaction evidence="1">
        <text>an N-acyl-L-alpha-aminoacyl-tRNA + H2O = an N-acyl-L-amino acid + a tRNA + H(+)</text>
        <dbReference type="Rhea" id="RHEA:54448"/>
        <dbReference type="Rhea" id="RHEA-COMP:10123"/>
        <dbReference type="Rhea" id="RHEA-COMP:13883"/>
        <dbReference type="ChEBI" id="CHEBI:15377"/>
        <dbReference type="ChEBI" id="CHEBI:15378"/>
        <dbReference type="ChEBI" id="CHEBI:59874"/>
        <dbReference type="ChEBI" id="CHEBI:78442"/>
        <dbReference type="ChEBI" id="CHEBI:138191"/>
        <dbReference type="EC" id="3.1.1.29"/>
    </reaction>
</comment>
<comment type="subunit">
    <text evidence="1">Monomer.</text>
</comment>
<comment type="subcellular location">
    <subcellularLocation>
        <location evidence="1">Cytoplasm</location>
    </subcellularLocation>
</comment>
<comment type="similarity">
    <text evidence="1">Belongs to the PTH family.</text>
</comment>
<keyword id="KW-0963">Cytoplasm</keyword>
<keyword id="KW-0378">Hydrolase</keyword>
<keyword id="KW-1185">Reference proteome</keyword>
<keyword id="KW-0694">RNA-binding</keyword>
<keyword id="KW-0820">tRNA-binding</keyword>
<evidence type="ECO:0000255" key="1">
    <source>
        <dbReference type="HAMAP-Rule" id="MF_00083"/>
    </source>
</evidence>
<sequence length="190" mass="21705">MKCIVGLGNIGKRFELTRHNIGFEVVDDILERHQFTLDKQKFKGAYTIERLNGEKVLFIEPMTMMNLSGQAVAPLMDYYNVDVEDLIVLYDDLDLEQGQVRLRQKGSAGGHNGMKSIIKMLGTDQFKRIRIGVGRPTNGMSVPDYVLQKFSKEEMIIMEKVIEHSARAVESFIESSRFDHVMNEFNGEVK</sequence>
<reference key="1">
    <citation type="journal article" date="2005" name="J. Bacteriol.">
        <title>Insights on evolution of virulence and resistance from the complete genome analysis of an early methicillin-resistant Staphylococcus aureus strain and a biofilm-producing methicillin-resistant Staphylococcus epidermidis strain.</title>
        <authorList>
            <person name="Gill S.R."/>
            <person name="Fouts D.E."/>
            <person name="Archer G.L."/>
            <person name="Mongodin E.F."/>
            <person name="DeBoy R.T."/>
            <person name="Ravel J."/>
            <person name="Paulsen I.T."/>
            <person name="Kolonay J.F."/>
            <person name="Brinkac L.M."/>
            <person name="Beanan M.J."/>
            <person name="Dodson R.J."/>
            <person name="Daugherty S.C."/>
            <person name="Madupu R."/>
            <person name="Angiuoli S.V."/>
            <person name="Durkin A.S."/>
            <person name="Haft D.H."/>
            <person name="Vamathevan J.J."/>
            <person name="Khouri H."/>
            <person name="Utterback T.R."/>
            <person name="Lee C."/>
            <person name="Dimitrov G."/>
            <person name="Jiang L."/>
            <person name="Qin H."/>
            <person name="Weidman J."/>
            <person name="Tran K."/>
            <person name="Kang K.H."/>
            <person name="Hance I.R."/>
            <person name="Nelson K.E."/>
            <person name="Fraser C.M."/>
        </authorList>
    </citation>
    <scope>NUCLEOTIDE SEQUENCE [LARGE SCALE GENOMIC DNA]</scope>
    <source>
        <strain>ATCC 35984 / DSM 28319 / BCRC 17069 / CCUG 31568 / BM 3577 / RP62A</strain>
    </source>
</reference>
<name>PTH_STAEQ</name>
<protein>
    <recommendedName>
        <fullName evidence="1">Peptidyl-tRNA hydrolase</fullName>
        <shortName evidence="1">Pth</shortName>
        <ecNumber evidence="1">3.1.1.29</ecNumber>
    </recommendedName>
</protein>